<name>RCSA_SALTI</name>
<accession>Q56083</accession>
<keyword id="KW-0238">DNA-binding</keyword>
<keyword id="KW-0716">Sensory transduction</keyword>
<keyword id="KW-0804">Transcription</keyword>
<keyword id="KW-0805">Transcription regulation</keyword>
<reference key="1">
    <citation type="journal article" date="1996" name="J. Bacteriol.">
        <title>Characterization of the rcsA and rcsB genes from Salmonella typhi: rcsB through tviA is involved in regulation of Vi antigen synthesis.</title>
        <authorList>
            <person name="Virlogeux I."/>
            <person name="Waxin H."/>
            <person name="Ecobichon C."/>
            <person name="Lee J.O."/>
            <person name="Popoff M.Y."/>
        </authorList>
    </citation>
    <scope>NUCLEOTIDE SEQUENCE [GENOMIC DNA]</scope>
    <source>
        <strain>ATCC 700931 / Ty2</strain>
    </source>
</reference>
<reference key="2">
    <citation type="journal article" date="2001" name="Nature">
        <title>Complete genome sequence of a multiple drug resistant Salmonella enterica serovar Typhi CT18.</title>
        <authorList>
            <person name="Parkhill J."/>
            <person name="Dougan G."/>
            <person name="James K.D."/>
            <person name="Thomson N.R."/>
            <person name="Pickard D."/>
            <person name="Wain J."/>
            <person name="Churcher C.M."/>
            <person name="Mungall K.L."/>
            <person name="Bentley S.D."/>
            <person name="Holden M.T.G."/>
            <person name="Sebaihia M."/>
            <person name="Baker S."/>
            <person name="Basham D."/>
            <person name="Brooks K."/>
            <person name="Chillingworth T."/>
            <person name="Connerton P."/>
            <person name="Cronin A."/>
            <person name="Davis P."/>
            <person name="Davies R.M."/>
            <person name="Dowd L."/>
            <person name="White N."/>
            <person name="Farrar J."/>
            <person name="Feltwell T."/>
            <person name="Hamlin N."/>
            <person name="Haque A."/>
            <person name="Hien T.T."/>
            <person name="Holroyd S."/>
            <person name="Jagels K."/>
            <person name="Krogh A."/>
            <person name="Larsen T.S."/>
            <person name="Leather S."/>
            <person name="Moule S."/>
            <person name="O'Gaora P."/>
            <person name="Parry C."/>
            <person name="Quail M.A."/>
            <person name="Rutherford K.M."/>
            <person name="Simmonds M."/>
            <person name="Skelton J."/>
            <person name="Stevens K."/>
            <person name="Whitehead S."/>
            <person name="Barrell B.G."/>
        </authorList>
    </citation>
    <scope>NUCLEOTIDE SEQUENCE [LARGE SCALE GENOMIC DNA]</scope>
    <source>
        <strain>CT18</strain>
    </source>
</reference>
<reference key="3">
    <citation type="journal article" date="2003" name="J. Bacteriol.">
        <title>Comparative genomics of Salmonella enterica serovar Typhi strains Ty2 and CT18.</title>
        <authorList>
            <person name="Deng W."/>
            <person name="Liou S.-R."/>
            <person name="Plunkett G. III"/>
            <person name="Mayhew G.F."/>
            <person name="Rose D.J."/>
            <person name="Burland V."/>
            <person name="Kodoyianni V."/>
            <person name="Schwartz D.C."/>
            <person name="Blattner F.R."/>
        </authorList>
    </citation>
    <scope>NUCLEOTIDE SEQUENCE [LARGE SCALE GENOMIC DNA]</scope>
    <source>
        <strain>ATCC 700931 / Ty2</strain>
    </source>
</reference>
<dbReference type="EMBL" id="X87687">
    <property type="protein sequence ID" value="CAA61019.1"/>
    <property type="molecule type" value="Genomic_DNA"/>
</dbReference>
<dbReference type="EMBL" id="AL513382">
    <property type="protein sequence ID" value="CAD05730.1"/>
    <property type="molecule type" value="Genomic_DNA"/>
</dbReference>
<dbReference type="EMBL" id="AE014613">
    <property type="protein sequence ID" value="AAO68573.1"/>
    <property type="molecule type" value="Genomic_DNA"/>
</dbReference>
<dbReference type="RefSeq" id="NP_456543.1">
    <property type="nucleotide sequence ID" value="NC_003198.1"/>
</dbReference>
<dbReference type="RefSeq" id="WP_000103972.1">
    <property type="nucleotide sequence ID" value="NZ_WSUR01000004.1"/>
</dbReference>
<dbReference type="SMR" id="Q56083"/>
<dbReference type="STRING" id="220341.gene:17586098"/>
<dbReference type="KEGG" id="stt:t0895"/>
<dbReference type="KEGG" id="sty:STY2190"/>
<dbReference type="PATRIC" id="fig|220341.7.peg.2205"/>
<dbReference type="eggNOG" id="COG2771">
    <property type="taxonomic scope" value="Bacteria"/>
</dbReference>
<dbReference type="HOGENOM" id="CLU_105065_0_0_6"/>
<dbReference type="OMA" id="MLRMWMS"/>
<dbReference type="OrthoDB" id="6613734at2"/>
<dbReference type="Proteomes" id="UP000000541">
    <property type="component" value="Chromosome"/>
</dbReference>
<dbReference type="Proteomes" id="UP000002670">
    <property type="component" value="Chromosome"/>
</dbReference>
<dbReference type="GO" id="GO:0003677">
    <property type="term" value="F:DNA binding"/>
    <property type="evidence" value="ECO:0007669"/>
    <property type="project" value="UniProtKB-UniRule"/>
</dbReference>
<dbReference type="GO" id="GO:0006355">
    <property type="term" value="P:regulation of DNA-templated transcription"/>
    <property type="evidence" value="ECO:0007669"/>
    <property type="project" value="UniProtKB-UniRule"/>
</dbReference>
<dbReference type="CDD" id="cd06170">
    <property type="entry name" value="LuxR_C_like"/>
    <property type="match status" value="1"/>
</dbReference>
<dbReference type="Gene3D" id="1.10.10.10">
    <property type="entry name" value="Winged helix-like DNA-binding domain superfamily/Winged helix DNA-binding domain"/>
    <property type="match status" value="1"/>
</dbReference>
<dbReference type="HAMAP" id="MF_00982">
    <property type="entry name" value="RcsA"/>
    <property type="match status" value="1"/>
</dbReference>
<dbReference type="InterPro" id="IPR030866">
    <property type="entry name" value="RcsA"/>
</dbReference>
<dbReference type="InterPro" id="IPR016032">
    <property type="entry name" value="Sig_transdc_resp-reg_C-effctor"/>
</dbReference>
<dbReference type="InterPro" id="IPR000792">
    <property type="entry name" value="Tscrpt_reg_LuxR_C"/>
</dbReference>
<dbReference type="InterPro" id="IPR036388">
    <property type="entry name" value="WH-like_DNA-bd_sf"/>
</dbReference>
<dbReference type="NCBIfam" id="NF011940">
    <property type="entry name" value="PRK15411.1"/>
    <property type="match status" value="1"/>
</dbReference>
<dbReference type="Pfam" id="PF00196">
    <property type="entry name" value="GerE"/>
    <property type="match status" value="1"/>
</dbReference>
<dbReference type="PRINTS" id="PR00038">
    <property type="entry name" value="HTHLUXR"/>
</dbReference>
<dbReference type="SMART" id="SM00421">
    <property type="entry name" value="HTH_LUXR"/>
    <property type="match status" value="1"/>
</dbReference>
<dbReference type="SUPFAM" id="SSF46894">
    <property type="entry name" value="C-terminal effector domain of the bipartite response regulators"/>
    <property type="match status" value="1"/>
</dbReference>
<dbReference type="PROSITE" id="PS00622">
    <property type="entry name" value="HTH_LUXR_1"/>
    <property type="match status" value="1"/>
</dbReference>
<dbReference type="PROSITE" id="PS50043">
    <property type="entry name" value="HTH_LUXR_2"/>
    <property type="match status" value="1"/>
</dbReference>
<protein>
    <recommendedName>
        <fullName evidence="1">Transcriptional regulatory protein RcsA</fullName>
    </recommendedName>
</protein>
<proteinExistence type="inferred from homology"/>
<comment type="function">
    <text evidence="1">Component of the Rcs signaling system, which controls transcription of numerous genes. Binds, with RcsB, to the RcsAB box to regulate expression of genes.</text>
</comment>
<comment type="subunit">
    <text evidence="1">Interacts with RcsB.</text>
</comment>
<comment type="similarity">
    <text evidence="1">Belongs to the RcsA family.</text>
</comment>
<gene>
    <name evidence="1" type="primary">rcsA</name>
    <name type="ordered locus">STY2190</name>
    <name type="ordered locus">t0895</name>
</gene>
<sequence length="207" mass="23274">MSTIIMDLCSYTRLGLSGYLVSRGVKKREINDIETVDELAIACGAHQPSVVFINEDCFIHTPSDSQQIKQIINQHPDTLFIVFMAIANVHFDEYLLVRKNLLISSKSIKPDSLDTLLGDILKKESGISGTINLPTLSLSRTESSMLRMWMEGQGTIQISDRMNIKAKTVSSHKGNIKRKIKTHNKQVIYHVVRLTDNVTNGIFANMR</sequence>
<feature type="chain" id="PRO_0000184180" description="Transcriptional regulatory protein RcsA">
    <location>
        <begin position="1"/>
        <end position="207"/>
    </location>
</feature>
<feature type="domain" description="HTH luxR-type" evidence="1">
    <location>
        <begin position="131"/>
        <end position="196"/>
    </location>
</feature>
<feature type="DNA-binding region" description="H-T-H motif" evidence="1">
    <location>
        <begin position="155"/>
        <end position="174"/>
    </location>
</feature>
<organism>
    <name type="scientific">Salmonella typhi</name>
    <dbReference type="NCBI Taxonomy" id="90370"/>
    <lineage>
        <taxon>Bacteria</taxon>
        <taxon>Pseudomonadati</taxon>
        <taxon>Pseudomonadota</taxon>
        <taxon>Gammaproteobacteria</taxon>
        <taxon>Enterobacterales</taxon>
        <taxon>Enterobacteriaceae</taxon>
        <taxon>Salmonella</taxon>
    </lineage>
</organism>
<evidence type="ECO:0000255" key="1">
    <source>
        <dbReference type="HAMAP-Rule" id="MF_00982"/>
    </source>
</evidence>